<organism>
    <name type="scientific">Bos taurus</name>
    <name type="common">Bovine</name>
    <dbReference type="NCBI Taxonomy" id="9913"/>
    <lineage>
        <taxon>Eukaryota</taxon>
        <taxon>Metazoa</taxon>
        <taxon>Chordata</taxon>
        <taxon>Craniata</taxon>
        <taxon>Vertebrata</taxon>
        <taxon>Euteleostomi</taxon>
        <taxon>Mammalia</taxon>
        <taxon>Eutheria</taxon>
        <taxon>Laurasiatheria</taxon>
        <taxon>Artiodactyla</taxon>
        <taxon>Ruminantia</taxon>
        <taxon>Pecora</taxon>
        <taxon>Bovidae</taxon>
        <taxon>Bovinae</taxon>
        <taxon>Bos</taxon>
    </lineage>
</organism>
<feature type="signal peptide" evidence="2">
    <location>
        <begin position="1"/>
        <end position="22"/>
    </location>
</feature>
<feature type="chain" id="PRO_0000299149" description="UDP-glucuronosyltransferase 3A1">
    <location>
        <begin position="23"/>
        <end position="523"/>
    </location>
</feature>
<feature type="topological domain" description="Extracellular" evidence="2">
    <location>
        <begin position="23"/>
        <end position="483"/>
    </location>
</feature>
<feature type="transmembrane region" description="Helical" evidence="2">
    <location>
        <begin position="484"/>
        <end position="504"/>
    </location>
</feature>
<feature type="topological domain" description="Cytoplasmic" evidence="2">
    <location>
        <begin position="505"/>
        <end position="523"/>
    </location>
</feature>
<feature type="glycosylation site" description="N-linked (GlcNAc...) asparagine" evidence="2">
    <location>
        <position position="52"/>
    </location>
</feature>
<keyword id="KW-0325">Glycoprotein</keyword>
<keyword id="KW-0328">Glycosyltransferase</keyword>
<keyword id="KW-0472">Membrane</keyword>
<keyword id="KW-1185">Reference proteome</keyword>
<keyword id="KW-0732">Signal</keyword>
<keyword id="KW-0808">Transferase</keyword>
<keyword id="KW-0812">Transmembrane</keyword>
<keyword id="KW-1133">Transmembrane helix</keyword>
<gene>
    <name type="primary">UGT3A1</name>
</gene>
<dbReference type="EC" id="2.4.1.17"/>
<dbReference type="EMBL" id="BC115988">
    <property type="protein sequence ID" value="AAI15989.1"/>
    <property type="molecule type" value="mRNA"/>
</dbReference>
<dbReference type="RefSeq" id="NP_001069555.1">
    <property type="nucleotide sequence ID" value="NM_001076087.1"/>
</dbReference>
<dbReference type="SMR" id="Q1LZI1"/>
<dbReference type="FunCoup" id="Q1LZI1">
    <property type="interactions" value="53"/>
</dbReference>
<dbReference type="STRING" id="9913.ENSBTAP00000003497"/>
<dbReference type="CAZy" id="GT1">
    <property type="family name" value="Glycosyltransferase Family 1"/>
</dbReference>
<dbReference type="GlyCosmos" id="Q1LZI1">
    <property type="glycosylation" value="1 site, No reported glycans"/>
</dbReference>
<dbReference type="GlyGen" id="Q1LZI1">
    <property type="glycosylation" value="1 site"/>
</dbReference>
<dbReference type="PaxDb" id="9913-ENSBTAP00000003497"/>
<dbReference type="Ensembl" id="ENSBTAT00000003497.6">
    <property type="protein sequence ID" value="ENSBTAP00000003497.4"/>
    <property type="gene ID" value="ENSBTAG00000002701.7"/>
</dbReference>
<dbReference type="GeneID" id="537188"/>
<dbReference type="KEGG" id="bta:537188"/>
<dbReference type="CTD" id="167127"/>
<dbReference type="VEuPathDB" id="HostDB:ENSBTAG00000002701"/>
<dbReference type="eggNOG" id="KOG1192">
    <property type="taxonomic scope" value="Eukaryota"/>
</dbReference>
<dbReference type="GeneTree" id="ENSGT00940000161263"/>
<dbReference type="HOGENOM" id="CLU_012949_3_2_1"/>
<dbReference type="InParanoid" id="Q1LZI1"/>
<dbReference type="OMA" id="YASFQRP"/>
<dbReference type="OrthoDB" id="5835829at2759"/>
<dbReference type="TreeFam" id="TF315472"/>
<dbReference type="Proteomes" id="UP000009136">
    <property type="component" value="Chromosome 20"/>
</dbReference>
<dbReference type="Bgee" id="ENSBTAG00000002701">
    <property type="expression patterns" value="Expressed in liver and 11 other cell types or tissues"/>
</dbReference>
<dbReference type="GO" id="GO:0043541">
    <property type="term" value="C:UDP-N-acetylglucosamine transferase complex"/>
    <property type="evidence" value="ECO:0000318"/>
    <property type="project" value="GO_Central"/>
</dbReference>
<dbReference type="GO" id="GO:0015020">
    <property type="term" value="F:glucuronosyltransferase activity"/>
    <property type="evidence" value="ECO:0000318"/>
    <property type="project" value="GO_Central"/>
</dbReference>
<dbReference type="CDD" id="cd03784">
    <property type="entry name" value="GT1_Gtf-like"/>
    <property type="match status" value="1"/>
</dbReference>
<dbReference type="FunFam" id="3.40.50.2000:FF:000094">
    <property type="entry name" value="UDP-glucuronosyltransferase"/>
    <property type="match status" value="1"/>
</dbReference>
<dbReference type="FunFam" id="3.40.50.2000:FF:000155">
    <property type="entry name" value="UDP-glucuronosyltransferase"/>
    <property type="match status" value="1"/>
</dbReference>
<dbReference type="Gene3D" id="3.40.50.2000">
    <property type="entry name" value="Glycogen Phosphorylase B"/>
    <property type="match status" value="2"/>
</dbReference>
<dbReference type="InterPro" id="IPR050271">
    <property type="entry name" value="UDP-glycosyltransferase"/>
</dbReference>
<dbReference type="InterPro" id="IPR002213">
    <property type="entry name" value="UDP_glucos_trans"/>
</dbReference>
<dbReference type="InterPro" id="IPR035595">
    <property type="entry name" value="UDP_glycos_trans_CS"/>
</dbReference>
<dbReference type="PANTHER" id="PTHR48043">
    <property type="entry name" value="EG:EG0003.4 PROTEIN-RELATED"/>
    <property type="match status" value="1"/>
</dbReference>
<dbReference type="PANTHER" id="PTHR48043:SF24">
    <property type="entry name" value="UDP-GLUCURONOSYLTRANSFERASE 3A2"/>
    <property type="match status" value="1"/>
</dbReference>
<dbReference type="Pfam" id="PF00201">
    <property type="entry name" value="UDPGT"/>
    <property type="match status" value="1"/>
</dbReference>
<dbReference type="SUPFAM" id="SSF53756">
    <property type="entry name" value="UDP-Glycosyltransferase/glycogen phosphorylase"/>
    <property type="match status" value="1"/>
</dbReference>
<dbReference type="PROSITE" id="PS00375">
    <property type="entry name" value="UDPGT"/>
    <property type="match status" value="1"/>
</dbReference>
<protein>
    <recommendedName>
        <fullName>UDP-glucuronosyltransferase 3A1</fullName>
        <shortName>UDPGT 3A1</shortName>
        <ecNumber>2.4.1.17</ecNumber>
    </recommendedName>
</protein>
<evidence type="ECO:0000250" key="1"/>
<evidence type="ECO:0000255" key="2"/>
<evidence type="ECO:0000305" key="3"/>
<accession>Q1LZI1</accession>
<name>UD3A1_BOVIN</name>
<reference key="1">
    <citation type="submission" date="2006-05" db="EMBL/GenBank/DDBJ databases">
        <authorList>
            <consortium name="NIH - Mammalian Gene Collection (MGC) project"/>
        </authorList>
    </citation>
    <scope>NUCLEOTIDE SEQUENCE [LARGE SCALE MRNA]</scope>
    <source>
        <strain>Hereford</strain>
        <tissue>Testis</tissue>
    </source>
</reference>
<comment type="function">
    <text evidence="1">UDP-glucuronosyltransferases catalyze phase II biotransformation reactions in which lipophilic substrates are conjugated with glucuronic acid to increase water solubility and enhance excretion. They are of major importance in the conjugation and subsequent elimination of potentially toxic xenobiotics and endogenous compounds (By similarity).</text>
</comment>
<comment type="catalytic activity">
    <reaction>
        <text>glucuronate acceptor + UDP-alpha-D-glucuronate = acceptor beta-D-glucuronoside + UDP + H(+)</text>
        <dbReference type="Rhea" id="RHEA:21032"/>
        <dbReference type="ChEBI" id="CHEBI:15378"/>
        <dbReference type="ChEBI" id="CHEBI:58052"/>
        <dbReference type="ChEBI" id="CHEBI:58223"/>
        <dbReference type="ChEBI" id="CHEBI:132367"/>
        <dbReference type="ChEBI" id="CHEBI:132368"/>
        <dbReference type="EC" id="2.4.1.17"/>
    </reaction>
</comment>
<comment type="subcellular location">
    <subcellularLocation>
        <location evidence="3">Membrane</location>
        <topology evidence="3">Single-pass type I membrane protein</topology>
    </subcellularLocation>
</comment>
<comment type="similarity">
    <text evidence="3">Belongs to the UDP-glycosyltransferase family.</text>
</comment>
<proteinExistence type="evidence at transcript level"/>
<sequence>MAGQQALLLFGFILPGLLFSEAAKILTVSLVGGSHFLLMHQISQILQDHGHNVTMLLQKGNLLLPGFKEEEKSYKVFNWFLPEDCNEEFKRSFHSFMEKTFGGRCKFEHFLNIMELLGHHCSHLLRRKDVMKSLKNENFDLVIVEMFDYCPFLVAEKLGKPFVAILPSALGTVDFGLPSPLSYVPVFYSLLTDQMDFWGRVKNFLMFFEFFKKQWKIQSAYDDTIKEHFPDDSRPVLSHLLTKAELWFVNTDFAFDFARPLLPNTVCIGGLMSKPVKPVPQEFENFITKFGDSGFVLVSLGSMVSFIRSQEVLKEMNAAFAHLPQGVIWKYNPSHWPKDIKLAPNVKIVHWLPQNDLLGHPRIRLFVSHGGMNSIMEAIQHGVPMVGIPLFGDQHENLLRVKAKKFGVSIQLKQIKAETLALKMKQVIEDKRYKSAAEAASIIRRSQPLTPAQRLVGWINHILQTGGAAHLKPHAFQQPWYEQYLLDVFLFLLVVTLGTMWLCGKLLGLVARWLCGARKLKKA</sequence>